<feature type="chain" id="PRO_0000162484" description="Regulatory protein RecX">
    <location>
        <begin position="1"/>
        <end position="258"/>
    </location>
</feature>
<proteinExistence type="inferred from homology"/>
<organism>
    <name type="scientific">Streptococcus pyogenes serotype M3 (strain ATCC BAA-595 / MGAS315)</name>
    <dbReference type="NCBI Taxonomy" id="198466"/>
    <lineage>
        <taxon>Bacteria</taxon>
        <taxon>Bacillati</taxon>
        <taxon>Bacillota</taxon>
        <taxon>Bacilli</taxon>
        <taxon>Lactobacillales</taxon>
        <taxon>Streptococcaceae</taxon>
        <taxon>Streptococcus</taxon>
    </lineage>
</organism>
<dbReference type="EMBL" id="AE014074">
    <property type="protein sequence ID" value="AAM79962.1"/>
    <property type="molecule type" value="Genomic_DNA"/>
</dbReference>
<dbReference type="RefSeq" id="WP_002991791.1">
    <property type="nucleotide sequence ID" value="NC_004070.1"/>
</dbReference>
<dbReference type="SMR" id="P0DD92"/>
<dbReference type="GeneID" id="69900527"/>
<dbReference type="KEGG" id="spg:SpyM3_1355"/>
<dbReference type="HOGENOM" id="CLU_066607_4_0_9"/>
<dbReference type="Proteomes" id="UP000000564">
    <property type="component" value="Chromosome"/>
</dbReference>
<dbReference type="GO" id="GO:0005737">
    <property type="term" value="C:cytoplasm"/>
    <property type="evidence" value="ECO:0007669"/>
    <property type="project" value="UniProtKB-SubCell"/>
</dbReference>
<dbReference type="GO" id="GO:0006282">
    <property type="term" value="P:regulation of DNA repair"/>
    <property type="evidence" value="ECO:0007669"/>
    <property type="project" value="UniProtKB-UniRule"/>
</dbReference>
<dbReference type="Gene3D" id="1.10.10.10">
    <property type="entry name" value="Winged helix-like DNA-binding domain superfamily/Winged helix DNA-binding domain"/>
    <property type="match status" value="4"/>
</dbReference>
<dbReference type="HAMAP" id="MF_01114">
    <property type="entry name" value="RecX"/>
    <property type="match status" value="1"/>
</dbReference>
<dbReference type="InterPro" id="IPR053926">
    <property type="entry name" value="RecX_HTH_1st"/>
</dbReference>
<dbReference type="InterPro" id="IPR053924">
    <property type="entry name" value="RecX_HTH_2nd"/>
</dbReference>
<dbReference type="InterPro" id="IPR053925">
    <property type="entry name" value="RecX_HTH_3rd"/>
</dbReference>
<dbReference type="InterPro" id="IPR003783">
    <property type="entry name" value="Regulatory_RecX"/>
</dbReference>
<dbReference type="InterPro" id="IPR036388">
    <property type="entry name" value="WH-like_DNA-bd_sf"/>
</dbReference>
<dbReference type="NCBIfam" id="NF010733">
    <property type="entry name" value="PRK14135.1"/>
    <property type="match status" value="1"/>
</dbReference>
<dbReference type="PANTHER" id="PTHR33602">
    <property type="entry name" value="REGULATORY PROTEIN RECX FAMILY PROTEIN"/>
    <property type="match status" value="1"/>
</dbReference>
<dbReference type="PANTHER" id="PTHR33602:SF1">
    <property type="entry name" value="REGULATORY PROTEIN RECX FAMILY PROTEIN"/>
    <property type="match status" value="1"/>
</dbReference>
<dbReference type="Pfam" id="PF21982">
    <property type="entry name" value="RecX_HTH1"/>
    <property type="match status" value="1"/>
</dbReference>
<dbReference type="Pfam" id="PF02631">
    <property type="entry name" value="RecX_HTH2"/>
    <property type="match status" value="1"/>
</dbReference>
<dbReference type="Pfam" id="PF21981">
    <property type="entry name" value="RecX_HTH3"/>
    <property type="match status" value="2"/>
</dbReference>
<reference key="1">
    <citation type="journal article" date="2002" name="Proc. Natl. Acad. Sci. U.S.A.">
        <title>Genome sequence of a serotype M3 strain of group A Streptococcus: phage-encoded toxins, the high-virulence phenotype, and clone emergence.</title>
        <authorList>
            <person name="Beres S.B."/>
            <person name="Sylva G.L."/>
            <person name="Barbian K.D."/>
            <person name="Lei B."/>
            <person name="Hoff J.S."/>
            <person name="Mammarella N.D."/>
            <person name="Liu M.-Y."/>
            <person name="Smoot J.C."/>
            <person name="Porcella S.F."/>
            <person name="Parkins L.D."/>
            <person name="Campbell D.S."/>
            <person name="Smith T.M."/>
            <person name="McCormick J.K."/>
            <person name="Leung D.Y.M."/>
            <person name="Schlievert P.M."/>
            <person name="Musser J.M."/>
        </authorList>
    </citation>
    <scope>NUCLEOTIDE SEQUENCE [LARGE SCALE GENOMIC DNA]</scope>
    <source>
        <strain>ATCC BAA-595 / MGAS315</strain>
    </source>
</reference>
<comment type="function">
    <text evidence="1">Modulates RecA activity.</text>
</comment>
<comment type="subcellular location">
    <subcellularLocation>
        <location evidence="1">Cytoplasm</location>
    </subcellularLocation>
</comment>
<comment type="similarity">
    <text evidence="1">Belongs to the RecX family.</text>
</comment>
<name>RECX_STRP3</name>
<evidence type="ECO:0000255" key="1">
    <source>
        <dbReference type="HAMAP-Rule" id="MF_01114"/>
    </source>
</evidence>
<keyword id="KW-0963">Cytoplasm</keyword>
<accession>P0DD92</accession>
<accession>Q79Y36</accession>
<accession>Q8K6F8</accession>
<gene>
    <name evidence="1" type="primary">recX</name>
    <name type="ordered locus">SpyM3_1355</name>
</gene>
<protein>
    <recommendedName>
        <fullName evidence="1">Regulatory protein RecX</fullName>
    </recommendedName>
</protein>
<sequence>MKITKIEKKKRLYLIELDNDDSLYVTEDTIVRFMLSKDKVLDNDQLEDMKHFAQLSYGKNLALYFLSFQQRSNKQVADYLRKHEIEEHIIADIITQLQEEQWIDDTKLADTYIRQNQLNGDKGPQVLKQKLLQKGIASHDIDPILSQTDFSQLAQKVSQKLFDKYQEKLPPKALKDKITQALLTKGFSYDLAKHSLNHLNFDQNNQEIEDLLDKELDKQYRKLSRKYDGYTLKQKLYQALYRKGYNSDDINCKLRNYL</sequence>